<evidence type="ECO:0000255" key="1">
    <source>
        <dbReference type="HAMAP-Rule" id="MF_00607"/>
    </source>
</evidence>
<sequence length="258" mass="29486">MEVIAKKRFGQNFLINKAIQKAIVDVACVDDENVIEIGPGLGALTDLIKELSKELIAYEIDNDLFKKLLVENQNSNVRFINEDFLNATFDEKKEWVVIGNIPYNITSEILFKLIENHSILKKATLMVQDEVANRLVAMPKTKEYSKLTVSVNFVGNVKKHFVVKASNFNPAPKVDSAIITIDFYKSLPYNLKKVLAFIKQIFAFKRKMLINNLVPQWPKADVIWAIEQIGHKQTTRAEELSLQEIMKLYEILVNSKSN</sequence>
<proteinExistence type="inferred from homology"/>
<comment type="function">
    <text evidence="1">Specifically dimethylates two adjacent adenosines (A1518 and A1519) in the loop of a conserved hairpin near the 3'-end of 16S rRNA in the 30S particle. May play a critical role in biogenesis of 30S subunits.</text>
</comment>
<comment type="catalytic activity">
    <reaction evidence="1">
        <text>adenosine(1518)/adenosine(1519) in 16S rRNA + 4 S-adenosyl-L-methionine = N(6)-dimethyladenosine(1518)/N(6)-dimethyladenosine(1519) in 16S rRNA + 4 S-adenosyl-L-homocysteine + 4 H(+)</text>
        <dbReference type="Rhea" id="RHEA:19609"/>
        <dbReference type="Rhea" id="RHEA-COMP:10232"/>
        <dbReference type="Rhea" id="RHEA-COMP:10233"/>
        <dbReference type="ChEBI" id="CHEBI:15378"/>
        <dbReference type="ChEBI" id="CHEBI:57856"/>
        <dbReference type="ChEBI" id="CHEBI:59789"/>
        <dbReference type="ChEBI" id="CHEBI:74411"/>
        <dbReference type="ChEBI" id="CHEBI:74493"/>
        <dbReference type="EC" id="2.1.1.182"/>
    </reaction>
</comment>
<comment type="subcellular location">
    <subcellularLocation>
        <location evidence="1">Cytoplasm</location>
    </subcellularLocation>
</comment>
<comment type="similarity">
    <text evidence="1">Belongs to the class I-like SAM-binding methyltransferase superfamily. rRNA adenine N(6)-methyltransferase family. RsmA subfamily.</text>
</comment>
<protein>
    <recommendedName>
        <fullName evidence="1">Ribosomal RNA small subunit methyltransferase A</fullName>
        <ecNumber evidence="1">2.1.1.182</ecNumber>
    </recommendedName>
    <alternativeName>
        <fullName evidence="1">16S rRNA (adenine(1518)-N(6)/adenine(1519)-N(6))-dimethyltransferase</fullName>
    </alternativeName>
    <alternativeName>
        <fullName evidence="1">16S rRNA dimethyladenosine transferase</fullName>
    </alternativeName>
    <alternativeName>
        <fullName evidence="1">16S rRNA dimethylase</fullName>
    </alternativeName>
    <alternativeName>
        <fullName evidence="1">S-adenosylmethionine-6-N', N'-adenosyl(rRNA) dimethyltransferase</fullName>
    </alternativeName>
</protein>
<keyword id="KW-0963">Cytoplasm</keyword>
<keyword id="KW-0489">Methyltransferase</keyword>
<keyword id="KW-1185">Reference proteome</keyword>
<keyword id="KW-0694">RNA-binding</keyword>
<keyword id="KW-0698">rRNA processing</keyword>
<keyword id="KW-0949">S-adenosyl-L-methionine</keyword>
<keyword id="KW-0808">Transferase</keyword>
<dbReference type="EC" id="2.1.1.182" evidence="1"/>
<dbReference type="EMBL" id="CP001047">
    <property type="protein sequence ID" value="ACF06974.1"/>
    <property type="molecule type" value="Genomic_DNA"/>
</dbReference>
<dbReference type="RefSeq" id="WP_012497931.1">
    <property type="nucleotide sequence ID" value="NC_011025.1"/>
</dbReference>
<dbReference type="SMR" id="B3PLS2"/>
<dbReference type="STRING" id="243272.MARTH_orf007"/>
<dbReference type="KEGG" id="mat:MARTH_orf007"/>
<dbReference type="eggNOG" id="COG0030">
    <property type="taxonomic scope" value="Bacteria"/>
</dbReference>
<dbReference type="HOGENOM" id="CLU_041220_0_1_14"/>
<dbReference type="Proteomes" id="UP000008812">
    <property type="component" value="Chromosome"/>
</dbReference>
<dbReference type="GO" id="GO:0005829">
    <property type="term" value="C:cytosol"/>
    <property type="evidence" value="ECO:0007669"/>
    <property type="project" value="TreeGrafter"/>
</dbReference>
<dbReference type="GO" id="GO:0052908">
    <property type="term" value="F:16S rRNA (adenine(1518)-N(6)/adenine(1519)-N(6))-dimethyltransferase activity"/>
    <property type="evidence" value="ECO:0007669"/>
    <property type="project" value="UniProtKB-EC"/>
</dbReference>
<dbReference type="GO" id="GO:0003723">
    <property type="term" value="F:RNA binding"/>
    <property type="evidence" value="ECO:0007669"/>
    <property type="project" value="UniProtKB-KW"/>
</dbReference>
<dbReference type="CDD" id="cd02440">
    <property type="entry name" value="AdoMet_MTases"/>
    <property type="match status" value="1"/>
</dbReference>
<dbReference type="Gene3D" id="1.10.8.100">
    <property type="entry name" value="Ribosomal RNA adenine dimethylase-like, domain 2"/>
    <property type="match status" value="1"/>
</dbReference>
<dbReference type="Gene3D" id="3.40.50.150">
    <property type="entry name" value="Vaccinia Virus protein VP39"/>
    <property type="match status" value="1"/>
</dbReference>
<dbReference type="HAMAP" id="MF_00607">
    <property type="entry name" value="16SrRNA_methyltr_A"/>
    <property type="match status" value="1"/>
</dbReference>
<dbReference type="InterPro" id="IPR001737">
    <property type="entry name" value="KsgA/Erm"/>
</dbReference>
<dbReference type="InterPro" id="IPR023165">
    <property type="entry name" value="rRNA_Ade_diMease-like_C"/>
</dbReference>
<dbReference type="InterPro" id="IPR020596">
    <property type="entry name" value="rRNA_Ade_Mease_Trfase_CS"/>
</dbReference>
<dbReference type="InterPro" id="IPR020598">
    <property type="entry name" value="rRNA_Ade_methylase_Trfase_N"/>
</dbReference>
<dbReference type="InterPro" id="IPR011530">
    <property type="entry name" value="rRNA_adenine_dimethylase"/>
</dbReference>
<dbReference type="InterPro" id="IPR029063">
    <property type="entry name" value="SAM-dependent_MTases_sf"/>
</dbReference>
<dbReference type="NCBIfam" id="TIGR00755">
    <property type="entry name" value="ksgA"/>
    <property type="match status" value="1"/>
</dbReference>
<dbReference type="PANTHER" id="PTHR11727">
    <property type="entry name" value="DIMETHYLADENOSINE TRANSFERASE"/>
    <property type="match status" value="1"/>
</dbReference>
<dbReference type="PANTHER" id="PTHR11727:SF7">
    <property type="entry name" value="DIMETHYLADENOSINE TRANSFERASE-RELATED"/>
    <property type="match status" value="1"/>
</dbReference>
<dbReference type="Pfam" id="PF00398">
    <property type="entry name" value="RrnaAD"/>
    <property type="match status" value="1"/>
</dbReference>
<dbReference type="SMART" id="SM00650">
    <property type="entry name" value="rADc"/>
    <property type="match status" value="1"/>
</dbReference>
<dbReference type="SUPFAM" id="SSF53335">
    <property type="entry name" value="S-adenosyl-L-methionine-dependent methyltransferases"/>
    <property type="match status" value="1"/>
</dbReference>
<dbReference type="PROSITE" id="PS01131">
    <property type="entry name" value="RRNA_A_DIMETH"/>
    <property type="match status" value="1"/>
</dbReference>
<dbReference type="PROSITE" id="PS51689">
    <property type="entry name" value="SAM_RNA_A_N6_MT"/>
    <property type="match status" value="1"/>
</dbReference>
<reference key="1">
    <citation type="journal article" date="2008" name="Infect. Immun.">
        <title>Genome of Mycoplasma arthritidis.</title>
        <authorList>
            <person name="Dybvig K."/>
            <person name="Zuhua C."/>
            <person name="Lao P."/>
            <person name="Jordan D.S."/>
            <person name="French C.T."/>
            <person name="Tu A.H."/>
            <person name="Loraine A.E."/>
        </authorList>
    </citation>
    <scope>NUCLEOTIDE SEQUENCE [LARGE SCALE GENOMIC DNA]</scope>
    <source>
        <strain>158L3-1</strain>
    </source>
</reference>
<name>RSMA_META1</name>
<accession>B3PLS2</accession>
<organism>
    <name type="scientific">Metamycoplasma arthritidis (strain 158L3-1)</name>
    <name type="common">Mycoplasma arthritidis</name>
    <dbReference type="NCBI Taxonomy" id="243272"/>
    <lineage>
        <taxon>Bacteria</taxon>
        <taxon>Bacillati</taxon>
        <taxon>Mycoplasmatota</taxon>
        <taxon>Mycoplasmoidales</taxon>
        <taxon>Metamycoplasmataceae</taxon>
        <taxon>Metamycoplasma</taxon>
    </lineage>
</organism>
<gene>
    <name evidence="1" type="primary">rsmA</name>
    <name evidence="1" type="synonym">ksgA</name>
    <name type="ordered locus">MARTH_orf007</name>
</gene>
<feature type="chain" id="PRO_1000130294" description="Ribosomal RNA small subunit methyltransferase A">
    <location>
        <begin position="1"/>
        <end position="258"/>
    </location>
</feature>
<feature type="binding site" evidence="1">
    <location>
        <position position="12"/>
    </location>
    <ligand>
        <name>S-adenosyl-L-methionine</name>
        <dbReference type="ChEBI" id="CHEBI:59789"/>
    </ligand>
</feature>
<feature type="binding site" evidence="1">
    <location>
        <position position="14"/>
    </location>
    <ligand>
        <name>S-adenosyl-L-methionine</name>
        <dbReference type="ChEBI" id="CHEBI:59789"/>
    </ligand>
</feature>
<feature type="binding site" evidence="1">
    <location>
        <position position="38"/>
    </location>
    <ligand>
        <name>S-adenosyl-L-methionine</name>
        <dbReference type="ChEBI" id="CHEBI:59789"/>
    </ligand>
</feature>
<feature type="binding site" evidence="1">
    <location>
        <position position="59"/>
    </location>
    <ligand>
        <name>S-adenosyl-L-methionine</name>
        <dbReference type="ChEBI" id="CHEBI:59789"/>
    </ligand>
</feature>
<feature type="binding site" evidence="1">
    <location>
        <position position="83"/>
    </location>
    <ligand>
        <name>S-adenosyl-L-methionine</name>
        <dbReference type="ChEBI" id="CHEBI:59789"/>
    </ligand>
</feature>
<feature type="binding site" evidence="1">
    <location>
        <position position="100"/>
    </location>
    <ligand>
        <name>S-adenosyl-L-methionine</name>
        <dbReference type="ChEBI" id="CHEBI:59789"/>
    </ligand>
</feature>